<evidence type="ECO:0000250" key="1"/>
<evidence type="ECO:0000255" key="2"/>
<evidence type="ECO:0000255" key="3">
    <source>
        <dbReference type="PROSITE-ProRule" id="PRU00095"/>
    </source>
</evidence>
<gene>
    <name type="primary">dosC</name>
    <name type="ordered locus">SFV_1733</name>
</gene>
<sequence length="381" mass="43983">MEMYFKRMKDEWTGLVEQADPLIRAKAAEIALAHAHYLSIEFYRIVRIDPHAEEFLSNEQVERQLKSAMERWIINVLSAQVDDVERLIQIQHTVAEVHARIGIPVEIVEMGFRVLKKILYPVIFSSDYSAAEKLQVYHFSINSIDIAMEVMTRAFTFSDSSASKEDENYRIFSLLENGEEEKERQIASILSWEIDIIYKVLLDSDLGSSLPLSQADFGLWFNHKGRHYFSGIAEVGHISRLIQDFDGIFNQTMRNTRILNNRSLRVKFLLQIRNTVSQIITLLRELFEEVSRHEVGMDVLTKLLNRRFLPTIFKREIAHANRTGTPLSVLIIDVDKFKEINDTWGHNTGDEILRKVSFLSQKRLVKSKILGAGSSRKLAVS</sequence>
<comment type="function">
    <text evidence="1">Globin-coupled heme-based oxygen sensor protein displaying diguanylate cyclase (DGC) activity in response to oxygen availability. Thus, catalyzes the synthesis of cyclic diguanylate (c-di-GMP) via the condensation of 2 GTP molecules. Cyclic-di-GMP is a second messenger which controls cell surface-associated traits in bacteria (By similarity).</text>
</comment>
<comment type="catalytic activity">
    <reaction>
        <text>2 GTP = 3',3'-c-di-GMP + 2 diphosphate</text>
        <dbReference type="Rhea" id="RHEA:24898"/>
        <dbReference type="ChEBI" id="CHEBI:33019"/>
        <dbReference type="ChEBI" id="CHEBI:37565"/>
        <dbReference type="ChEBI" id="CHEBI:58805"/>
        <dbReference type="EC" id="2.7.7.65"/>
    </reaction>
</comment>
<comment type="cofactor">
    <cofactor evidence="1">
        <name>heme</name>
        <dbReference type="ChEBI" id="CHEBI:30413"/>
    </cofactor>
    <text evidence="1">Binds 1 heme group per subunit.</text>
</comment>
<comment type="cofactor">
    <cofactor evidence="1">
        <name>Mg(2+)</name>
        <dbReference type="ChEBI" id="CHEBI:18420"/>
    </cofactor>
    <text evidence="1">Binds 1 Mg(2+) ion per subunit.</text>
</comment>
<comment type="pathway">
    <text>Purine metabolism; 3',5'-cyclic di-GMP biosynthesis.</text>
</comment>
<comment type="domain">
    <text evidence="1">Is composed of an N-terminal sensory globin-fold domain that binds heme and oxygen, and a C-terminal GGDEF diguanylate cyclase domain.</text>
</comment>
<proteinExistence type="inferred from homology"/>
<accession>Q0T466</accession>
<protein>
    <recommendedName>
        <fullName>Diguanylate cyclase DosC</fullName>
        <shortName>DGC</shortName>
        <ecNumber>2.7.7.65</ecNumber>
    </recommendedName>
    <alternativeName>
        <fullName>Direct oxygen-sensing cyclase</fullName>
    </alternativeName>
</protein>
<reference key="1">
    <citation type="journal article" date="2006" name="BMC Genomics">
        <title>Complete genome sequence of Shigella flexneri 5b and comparison with Shigella flexneri 2a.</title>
        <authorList>
            <person name="Nie H."/>
            <person name="Yang F."/>
            <person name="Zhang X."/>
            <person name="Yang J."/>
            <person name="Chen L."/>
            <person name="Wang J."/>
            <person name="Xiong Z."/>
            <person name="Peng J."/>
            <person name="Sun L."/>
            <person name="Dong J."/>
            <person name="Xue Y."/>
            <person name="Xu X."/>
            <person name="Chen S."/>
            <person name="Yao Z."/>
            <person name="Shen Y."/>
            <person name="Jin Q."/>
        </authorList>
    </citation>
    <scope>NUCLEOTIDE SEQUENCE [LARGE SCALE GENOMIC DNA]</scope>
    <source>
        <strain>8401</strain>
    </source>
</reference>
<organism>
    <name type="scientific">Shigella flexneri serotype 5b (strain 8401)</name>
    <dbReference type="NCBI Taxonomy" id="373384"/>
    <lineage>
        <taxon>Bacteria</taxon>
        <taxon>Pseudomonadati</taxon>
        <taxon>Pseudomonadota</taxon>
        <taxon>Gammaproteobacteria</taxon>
        <taxon>Enterobacterales</taxon>
        <taxon>Enterobacteriaceae</taxon>
        <taxon>Shigella</taxon>
    </lineage>
</organism>
<name>DOSC_SHIF8</name>
<keyword id="KW-0342">GTP-binding</keyword>
<keyword id="KW-0349">Heme</keyword>
<keyword id="KW-0408">Iron</keyword>
<keyword id="KW-0460">Magnesium</keyword>
<keyword id="KW-0479">Metal-binding</keyword>
<keyword id="KW-0547">Nucleotide-binding</keyword>
<keyword id="KW-0808">Transferase</keyword>
<feature type="chain" id="PRO_0000316156" description="Diguanylate cyclase DosC">
    <location>
        <begin position="1"/>
        <end position="381"/>
    </location>
</feature>
<feature type="domain" description="GGDEF" evidence="3">
    <location>
        <begin position="325"/>
        <end position="381"/>
    </location>
</feature>
<feature type="binding site" description="proximal binding residue" evidence="1">
    <location>
        <position position="98"/>
    </location>
    <ligand>
        <name>heme</name>
        <dbReference type="ChEBI" id="CHEBI:30413"/>
    </ligand>
    <ligandPart>
        <name>Fe</name>
        <dbReference type="ChEBI" id="CHEBI:18248"/>
    </ligandPart>
</feature>
<feature type="binding site" evidence="1">
    <location>
        <position position="333"/>
    </location>
    <ligand>
        <name>Mg(2+)</name>
        <dbReference type="ChEBI" id="CHEBI:18420"/>
    </ligand>
</feature>
<feature type="binding site" evidence="1">
    <location>
        <position position="341"/>
    </location>
    <ligand>
        <name>substrate</name>
    </ligand>
</feature>
<feature type="binding site" evidence="1">
    <location>
        <position position="350"/>
    </location>
    <ligand>
        <name>substrate</name>
    </ligand>
</feature>
<feature type="site" description="Involved in oxygen binding and important for the stability of the Fe(II)-O(2) complex" evidence="1">
    <location>
        <position position="43"/>
    </location>
</feature>
<feature type="site" description="Important for oxygen binding and stability of the Fe(II)-O(2) complex" evidence="1">
    <location>
        <position position="60"/>
    </location>
</feature>
<feature type="site" description="Critical for restricting water access to the heme distal side to avoid rapid autoxidation" evidence="1">
    <location>
        <position position="65"/>
    </location>
</feature>
<feature type="site" description="Transition state stabilizer" evidence="2">
    <location>
        <position position="338"/>
    </location>
</feature>
<dbReference type="EC" id="2.7.7.65"/>
<dbReference type="EMBL" id="CP000266">
    <property type="protein sequence ID" value="ABF03899.1"/>
    <property type="molecule type" value="Genomic_DNA"/>
</dbReference>
<dbReference type="SMR" id="Q0T466"/>
<dbReference type="KEGG" id="sfv:SFV_1733"/>
<dbReference type="HOGENOM" id="CLU_000445_11_5_6"/>
<dbReference type="UniPathway" id="UPA00599"/>
<dbReference type="Proteomes" id="UP000000659">
    <property type="component" value="Chromosome"/>
</dbReference>
<dbReference type="GO" id="GO:0005886">
    <property type="term" value="C:plasma membrane"/>
    <property type="evidence" value="ECO:0007669"/>
    <property type="project" value="TreeGrafter"/>
</dbReference>
<dbReference type="GO" id="GO:0052621">
    <property type="term" value="F:diguanylate cyclase activity"/>
    <property type="evidence" value="ECO:0007669"/>
    <property type="project" value="UniProtKB-EC"/>
</dbReference>
<dbReference type="GO" id="GO:0005525">
    <property type="term" value="F:GTP binding"/>
    <property type="evidence" value="ECO:0007669"/>
    <property type="project" value="UniProtKB-KW"/>
</dbReference>
<dbReference type="GO" id="GO:0020037">
    <property type="term" value="F:heme binding"/>
    <property type="evidence" value="ECO:0007669"/>
    <property type="project" value="InterPro"/>
</dbReference>
<dbReference type="GO" id="GO:0046872">
    <property type="term" value="F:metal ion binding"/>
    <property type="evidence" value="ECO:0007669"/>
    <property type="project" value="UniProtKB-KW"/>
</dbReference>
<dbReference type="GO" id="GO:0019825">
    <property type="term" value="F:oxygen binding"/>
    <property type="evidence" value="ECO:0007669"/>
    <property type="project" value="InterPro"/>
</dbReference>
<dbReference type="GO" id="GO:0043709">
    <property type="term" value="P:cell adhesion involved in single-species biofilm formation"/>
    <property type="evidence" value="ECO:0007669"/>
    <property type="project" value="TreeGrafter"/>
</dbReference>
<dbReference type="GO" id="GO:1902201">
    <property type="term" value="P:negative regulation of bacterial-type flagellum-dependent cell motility"/>
    <property type="evidence" value="ECO:0007669"/>
    <property type="project" value="TreeGrafter"/>
</dbReference>
<dbReference type="CDD" id="cd01949">
    <property type="entry name" value="GGDEF"/>
    <property type="match status" value="1"/>
</dbReference>
<dbReference type="CDD" id="cd14757">
    <property type="entry name" value="GS_EcDosC-like_GGDEF"/>
    <property type="match status" value="1"/>
</dbReference>
<dbReference type="FunFam" id="1.10.490.10:FF:000007">
    <property type="entry name" value="Diguanylate cyclase DosC"/>
    <property type="match status" value="1"/>
</dbReference>
<dbReference type="Gene3D" id="3.30.70.270">
    <property type="match status" value="1"/>
</dbReference>
<dbReference type="Gene3D" id="1.10.490.10">
    <property type="entry name" value="Globins"/>
    <property type="match status" value="1"/>
</dbReference>
<dbReference type="InterPro" id="IPR050469">
    <property type="entry name" value="Diguanylate_Cyclase"/>
</dbReference>
<dbReference type="InterPro" id="IPR048442">
    <property type="entry name" value="DosC_2nd"/>
</dbReference>
<dbReference type="InterPro" id="IPR039435">
    <property type="entry name" value="DosC_GS"/>
</dbReference>
<dbReference type="InterPro" id="IPR000160">
    <property type="entry name" value="GGDEF_dom"/>
</dbReference>
<dbReference type="InterPro" id="IPR009050">
    <property type="entry name" value="Globin-like_sf"/>
</dbReference>
<dbReference type="InterPro" id="IPR044398">
    <property type="entry name" value="Globin-sensor_dom"/>
</dbReference>
<dbReference type="InterPro" id="IPR012292">
    <property type="entry name" value="Globin/Proto"/>
</dbReference>
<dbReference type="InterPro" id="IPR029787">
    <property type="entry name" value="Nucleotide_cyclase"/>
</dbReference>
<dbReference type="InterPro" id="IPR043128">
    <property type="entry name" value="Rev_trsase/Diguanyl_cyclase"/>
</dbReference>
<dbReference type="NCBIfam" id="TIGR00254">
    <property type="entry name" value="GGDEF"/>
    <property type="match status" value="1"/>
</dbReference>
<dbReference type="PANTHER" id="PTHR45138:SF9">
    <property type="entry name" value="DIGUANYLATE CYCLASE DGCM-RELATED"/>
    <property type="match status" value="1"/>
</dbReference>
<dbReference type="PANTHER" id="PTHR45138">
    <property type="entry name" value="REGULATORY COMPONENTS OF SENSORY TRANSDUCTION SYSTEM"/>
    <property type="match status" value="1"/>
</dbReference>
<dbReference type="Pfam" id="PF21118">
    <property type="entry name" value="DosC_2nd"/>
    <property type="match status" value="1"/>
</dbReference>
<dbReference type="Pfam" id="PF00990">
    <property type="entry name" value="GGDEF"/>
    <property type="match status" value="1"/>
</dbReference>
<dbReference type="Pfam" id="PF11563">
    <property type="entry name" value="Protoglobin"/>
    <property type="match status" value="1"/>
</dbReference>
<dbReference type="SMART" id="SM00267">
    <property type="entry name" value="GGDEF"/>
    <property type="match status" value="1"/>
</dbReference>
<dbReference type="SUPFAM" id="SSF46458">
    <property type="entry name" value="Globin-like"/>
    <property type="match status" value="1"/>
</dbReference>
<dbReference type="SUPFAM" id="SSF55073">
    <property type="entry name" value="Nucleotide cyclase"/>
    <property type="match status" value="1"/>
</dbReference>
<dbReference type="PROSITE" id="PS50887">
    <property type="entry name" value="GGDEF"/>
    <property type="match status" value="1"/>
</dbReference>